<organism>
    <name type="scientific">Chelativorans sp. (strain BNC1)</name>
    <dbReference type="NCBI Taxonomy" id="266779"/>
    <lineage>
        <taxon>Bacteria</taxon>
        <taxon>Pseudomonadati</taxon>
        <taxon>Pseudomonadota</taxon>
        <taxon>Alphaproteobacteria</taxon>
        <taxon>Hyphomicrobiales</taxon>
        <taxon>Phyllobacteriaceae</taxon>
        <taxon>Chelativorans</taxon>
    </lineage>
</organism>
<gene>
    <name evidence="1" type="primary">tpiA</name>
    <name type="ordered locus">Meso_1636</name>
</gene>
<name>TPIS_CHESB</name>
<protein>
    <recommendedName>
        <fullName evidence="1">Triosephosphate isomerase</fullName>
        <shortName evidence="1">TIM</shortName>
        <shortName evidence="1">TPI</shortName>
        <ecNumber evidence="1">5.3.1.1</ecNumber>
    </recommendedName>
    <alternativeName>
        <fullName evidence="1">Triose-phosphate isomerase</fullName>
    </alternativeName>
</protein>
<sequence length="254" mass="25748">MTPTIRPLIAGNWKMHGTESSLGELKAIGSGFVEAAGAGADGVICVPATLLARASDILAKTPVATGGQDCHPATSGAHTGDIAAEMLADCGASYVIVGHSERRTDHHEADEDVAAKAEAAWRAGLTAIICIGETKIQREAGETLSVLSRQIAGSVPPGATAKNSVIAYEPVWAIGTGLTPTVEDVAQAHAHLRAELGMKLGIEADGMRLLYGGSVKPSNAGELLSILNVDGALIGGASLKAADFLAISAAVKGK</sequence>
<feature type="chain" id="PRO_0000307498" description="Triosephosphate isomerase">
    <location>
        <begin position="1"/>
        <end position="254"/>
    </location>
</feature>
<feature type="active site" description="Electrophile" evidence="1">
    <location>
        <position position="99"/>
    </location>
</feature>
<feature type="active site" description="Proton acceptor" evidence="1">
    <location>
        <position position="169"/>
    </location>
</feature>
<feature type="binding site" evidence="1">
    <location>
        <begin position="12"/>
        <end position="14"/>
    </location>
    <ligand>
        <name>substrate</name>
    </ligand>
</feature>
<feature type="binding site" evidence="1">
    <location>
        <position position="175"/>
    </location>
    <ligand>
        <name>substrate</name>
    </ligand>
</feature>
<feature type="binding site" evidence="1">
    <location>
        <position position="214"/>
    </location>
    <ligand>
        <name>substrate</name>
    </ligand>
</feature>
<feature type="binding site" evidence="1">
    <location>
        <begin position="235"/>
        <end position="236"/>
    </location>
    <ligand>
        <name>substrate</name>
    </ligand>
</feature>
<reference key="1">
    <citation type="submission" date="2006-06" db="EMBL/GenBank/DDBJ databases">
        <title>Complete sequence of chromosome of Mesorhizobium sp. BNC1.</title>
        <authorList>
            <consortium name="US DOE Joint Genome Institute"/>
            <person name="Copeland A."/>
            <person name="Lucas S."/>
            <person name="Lapidus A."/>
            <person name="Barry K."/>
            <person name="Detter J.C."/>
            <person name="Glavina del Rio T."/>
            <person name="Hammon N."/>
            <person name="Israni S."/>
            <person name="Dalin E."/>
            <person name="Tice H."/>
            <person name="Pitluck S."/>
            <person name="Chertkov O."/>
            <person name="Brettin T."/>
            <person name="Bruce D."/>
            <person name="Han C."/>
            <person name="Tapia R."/>
            <person name="Gilna P."/>
            <person name="Schmutz J."/>
            <person name="Larimer F."/>
            <person name="Land M."/>
            <person name="Hauser L."/>
            <person name="Kyrpides N."/>
            <person name="Mikhailova N."/>
            <person name="Richardson P."/>
        </authorList>
    </citation>
    <scope>NUCLEOTIDE SEQUENCE [LARGE SCALE GENOMIC DNA]</scope>
    <source>
        <strain>BNC1</strain>
    </source>
</reference>
<evidence type="ECO:0000255" key="1">
    <source>
        <dbReference type="HAMAP-Rule" id="MF_00147"/>
    </source>
</evidence>
<proteinExistence type="inferred from homology"/>
<dbReference type="EC" id="5.3.1.1" evidence="1"/>
<dbReference type="EMBL" id="CP000390">
    <property type="protein sequence ID" value="ABG63031.1"/>
    <property type="molecule type" value="Genomic_DNA"/>
</dbReference>
<dbReference type="SMR" id="Q11HU4"/>
<dbReference type="STRING" id="266779.Meso_1636"/>
<dbReference type="KEGG" id="mes:Meso_1636"/>
<dbReference type="eggNOG" id="COG0149">
    <property type="taxonomic scope" value="Bacteria"/>
</dbReference>
<dbReference type="HOGENOM" id="CLU_024251_2_1_5"/>
<dbReference type="OrthoDB" id="9809429at2"/>
<dbReference type="UniPathway" id="UPA00109">
    <property type="reaction ID" value="UER00189"/>
</dbReference>
<dbReference type="UniPathway" id="UPA00138"/>
<dbReference type="GO" id="GO:0005829">
    <property type="term" value="C:cytosol"/>
    <property type="evidence" value="ECO:0007669"/>
    <property type="project" value="TreeGrafter"/>
</dbReference>
<dbReference type="GO" id="GO:0004807">
    <property type="term" value="F:triose-phosphate isomerase activity"/>
    <property type="evidence" value="ECO:0007669"/>
    <property type="project" value="UniProtKB-UniRule"/>
</dbReference>
<dbReference type="GO" id="GO:0006094">
    <property type="term" value="P:gluconeogenesis"/>
    <property type="evidence" value="ECO:0007669"/>
    <property type="project" value="UniProtKB-UniRule"/>
</dbReference>
<dbReference type="GO" id="GO:0046166">
    <property type="term" value="P:glyceraldehyde-3-phosphate biosynthetic process"/>
    <property type="evidence" value="ECO:0007669"/>
    <property type="project" value="TreeGrafter"/>
</dbReference>
<dbReference type="GO" id="GO:0019563">
    <property type="term" value="P:glycerol catabolic process"/>
    <property type="evidence" value="ECO:0007669"/>
    <property type="project" value="TreeGrafter"/>
</dbReference>
<dbReference type="GO" id="GO:0006096">
    <property type="term" value="P:glycolytic process"/>
    <property type="evidence" value="ECO:0007669"/>
    <property type="project" value="UniProtKB-UniRule"/>
</dbReference>
<dbReference type="CDD" id="cd00311">
    <property type="entry name" value="TIM"/>
    <property type="match status" value="1"/>
</dbReference>
<dbReference type="FunFam" id="3.20.20.70:FF:000016">
    <property type="entry name" value="Triosephosphate isomerase"/>
    <property type="match status" value="1"/>
</dbReference>
<dbReference type="Gene3D" id="3.20.20.70">
    <property type="entry name" value="Aldolase class I"/>
    <property type="match status" value="1"/>
</dbReference>
<dbReference type="HAMAP" id="MF_00147_B">
    <property type="entry name" value="TIM_B"/>
    <property type="match status" value="1"/>
</dbReference>
<dbReference type="InterPro" id="IPR013785">
    <property type="entry name" value="Aldolase_TIM"/>
</dbReference>
<dbReference type="InterPro" id="IPR035990">
    <property type="entry name" value="TIM_sf"/>
</dbReference>
<dbReference type="InterPro" id="IPR022896">
    <property type="entry name" value="TrioseP_Isoase_bac/euk"/>
</dbReference>
<dbReference type="InterPro" id="IPR000652">
    <property type="entry name" value="Triosephosphate_isomerase"/>
</dbReference>
<dbReference type="InterPro" id="IPR020861">
    <property type="entry name" value="Triosephosphate_isomerase_AS"/>
</dbReference>
<dbReference type="NCBIfam" id="TIGR00419">
    <property type="entry name" value="tim"/>
    <property type="match status" value="1"/>
</dbReference>
<dbReference type="PANTHER" id="PTHR21139">
    <property type="entry name" value="TRIOSEPHOSPHATE ISOMERASE"/>
    <property type="match status" value="1"/>
</dbReference>
<dbReference type="PANTHER" id="PTHR21139:SF42">
    <property type="entry name" value="TRIOSEPHOSPHATE ISOMERASE"/>
    <property type="match status" value="1"/>
</dbReference>
<dbReference type="Pfam" id="PF00121">
    <property type="entry name" value="TIM"/>
    <property type="match status" value="1"/>
</dbReference>
<dbReference type="SUPFAM" id="SSF51351">
    <property type="entry name" value="Triosephosphate isomerase (TIM)"/>
    <property type="match status" value="1"/>
</dbReference>
<dbReference type="PROSITE" id="PS00171">
    <property type="entry name" value="TIM_1"/>
    <property type="match status" value="1"/>
</dbReference>
<dbReference type="PROSITE" id="PS51440">
    <property type="entry name" value="TIM_2"/>
    <property type="match status" value="1"/>
</dbReference>
<comment type="function">
    <text evidence="1">Involved in the gluconeogenesis. Catalyzes stereospecifically the conversion of dihydroxyacetone phosphate (DHAP) to D-glyceraldehyde-3-phosphate (G3P).</text>
</comment>
<comment type="catalytic activity">
    <reaction evidence="1">
        <text>D-glyceraldehyde 3-phosphate = dihydroxyacetone phosphate</text>
        <dbReference type="Rhea" id="RHEA:18585"/>
        <dbReference type="ChEBI" id="CHEBI:57642"/>
        <dbReference type="ChEBI" id="CHEBI:59776"/>
        <dbReference type="EC" id="5.3.1.1"/>
    </reaction>
</comment>
<comment type="pathway">
    <text evidence="1">Carbohydrate biosynthesis; gluconeogenesis.</text>
</comment>
<comment type="pathway">
    <text evidence="1">Carbohydrate degradation; glycolysis; D-glyceraldehyde 3-phosphate from glycerone phosphate: step 1/1.</text>
</comment>
<comment type="subunit">
    <text evidence="1">Homodimer.</text>
</comment>
<comment type="subcellular location">
    <subcellularLocation>
        <location evidence="1">Cytoplasm</location>
    </subcellularLocation>
</comment>
<comment type="similarity">
    <text evidence="1">Belongs to the triosephosphate isomerase family.</text>
</comment>
<keyword id="KW-0963">Cytoplasm</keyword>
<keyword id="KW-0312">Gluconeogenesis</keyword>
<keyword id="KW-0324">Glycolysis</keyword>
<keyword id="KW-0413">Isomerase</keyword>
<accession>Q11HU4</accession>